<accession>A1SYW3</accession>
<keyword id="KW-1185">Reference proteome</keyword>
<keyword id="KW-0687">Ribonucleoprotein</keyword>
<keyword id="KW-0689">Ribosomal protein</keyword>
<dbReference type="EMBL" id="CP000510">
    <property type="protein sequence ID" value="ABM04678.1"/>
    <property type="molecule type" value="Genomic_DNA"/>
</dbReference>
<dbReference type="RefSeq" id="WP_011771232.1">
    <property type="nucleotide sequence ID" value="NC_008709.1"/>
</dbReference>
<dbReference type="SMR" id="A1SYW3"/>
<dbReference type="STRING" id="357804.Ping_2976"/>
<dbReference type="KEGG" id="pin:Ping_2976"/>
<dbReference type="eggNOG" id="COG0052">
    <property type="taxonomic scope" value="Bacteria"/>
</dbReference>
<dbReference type="HOGENOM" id="CLU_040318_1_2_6"/>
<dbReference type="OrthoDB" id="9808036at2"/>
<dbReference type="Proteomes" id="UP000000639">
    <property type="component" value="Chromosome"/>
</dbReference>
<dbReference type="GO" id="GO:0022627">
    <property type="term" value="C:cytosolic small ribosomal subunit"/>
    <property type="evidence" value="ECO:0007669"/>
    <property type="project" value="TreeGrafter"/>
</dbReference>
<dbReference type="GO" id="GO:0003735">
    <property type="term" value="F:structural constituent of ribosome"/>
    <property type="evidence" value="ECO:0007669"/>
    <property type="project" value="InterPro"/>
</dbReference>
<dbReference type="GO" id="GO:0006412">
    <property type="term" value="P:translation"/>
    <property type="evidence" value="ECO:0007669"/>
    <property type="project" value="UniProtKB-UniRule"/>
</dbReference>
<dbReference type="CDD" id="cd01425">
    <property type="entry name" value="RPS2"/>
    <property type="match status" value="1"/>
</dbReference>
<dbReference type="FunFam" id="1.10.287.610:FF:000001">
    <property type="entry name" value="30S ribosomal protein S2"/>
    <property type="match status" value="1"/>
</dbReference>
<dbReference type="Gene3D" id="3.40.50.10490">
    <property type="entry name" value="Glucose-6-phosphate isomerase like protein, domain 1"/>
    <property type="match status" value="1"/>
</dbReference>
<dbReference type="Gene3D" id="1.10.287.610">
    <property type="entry name" value="Helix hairpin bin"/>
    <property type="match status" value="1"/>
</dbReference>
<dbReference type="HAMAP" id="MF_00291_B">
    <property type="entry name" value="Ribosomal_uS2_B"/>
    <property type="match status" value="1"/>
</dbReference>
<dbReference type="InterPro" id="IPR001865">
    <property type="entry name" value="Ribosomal_uS2"/>
</dbReference>
<dbReference type="InterPro" id="IPR005706">
    <property type="entry name" value="Ribosomal_uS2_bac/mit/plastid"/>
</dbReference>
<dbReference type="InterPro" id="IPR018130">
    <property type="entry name" value="Ribosomal_uS2_CS"/>
</dbReference>
<dbReference type="InterPro" id="IPR023591">
    <property type="entry name" value="Ribosomal_uS2_flav_dom_sf"/>
</dbReference>
<dbReference type="NCBIfam" id="TIGR01011">
    <property type="entry name" value="rpsB_bact"/>
    <property type="match status" value="1"/>
</dbReference>
<dbReference type="PANTHER" id="PTHR12534">
    <property type="entry name" value="30S RIBOSOMAL PROTEIN S2 PROKARYOTIC AND ORGANELLAR"/>
    <property type="match status" value="1"/>
</dbReference>
<dbReference type="PANTHER" id="PTHR12534:SF0">
    <property type="entry name" value="SMALL RIBOSOMAL SUBUNIT PROTEIN US2M"/>
    <property type="match status" value="1"/>
</dbReference>
<dbReference type="Pfam" id="PF00318">
    <property type="entry name" value="Ribosomal_S2"/>
    <property type="match status" value="1"/>
</dbReference>
<dbReference type="PRINTS" id="PR00395">
    <property type="entry name" value="RIBOSOMALS2"/>
</dbReference>
<dbReference type="SUPFAM" id="SSF52313">
    <property type="entry name" value="Ribosomal protein S2"/>
    <property type="match status" value="1"/>
</dbReference>
<dbReference type="PROSITE" id="PS00962">
    <property type="entry name" value="RIBOSOMAL_S2_1"/>
    <property type="match status" value="1"/>
</dbReference>
<dbReference type="PROSITE" id="PS00963">
    <property type="entry name" value="RIBOSOMAL_S2_2"/>
    <property type="match status" value="1"/>
</dbReference>
<sequence length="244" mass="27214">MANVSMRDMLQAGVHFGHQTRYWNPKMKPFIFGARNKVHIINLEKTVPMFNSALDFLEQKAAKKGKVLFVGTKRAASDAVKEAAISCDQFYVDHRWLGGMLTNWKTVRQSIKRLKDLEVQSQDGTFDKVTKKEALMLARELEKLDKTLGGIKNMGGIPDVIFVIDADHEHIAIKEANNLGIPVISIVDTNSCPDNIDYVVPGNDDAIRAIKLYLEAAATTIKAGREQDVIVQAEQDGFVEEVSE</sequence>
<organism>
    <name type="scientific">Psychromonas ingrahamii (strain DSM 17664 / CCUG 51855 / 37)</name>
    <dbReference type="NCBI Taxonomy" id="357804"/>
    <lineage>
        <taxon>Bacteria</taxon>
        <taxon>Pseudomonadati</taxon>
        <taxon>Pseudomonadota</taxon>
        <taxon>Gammaproteobacteria</taxon>
        <taxon>Alteromonadales</taxon>
        <taxon>Psychromonadaceae</taxon>
        <taxon>Psychromonas</taxon>
    </lineage>
</organism>
<feature type="chain" id="PRO_1000004039" description="Small ribosomal subunit protein uS2">
    <location>
        <begin position="1"/>
        <end position="244"/>
    </location>
</feature>
<gene>
    <name evidence="1" type="primary">rpsB</name>
    <name type="ordered locus">Ping_2976</name>
</gene>
<comment type="similarity">
    <text evidence="1">Belongs to the universal ribosomal protein uS2 family.</text>
</comment>
<protein>
    <recommendedName>
        <fullName evidence="1">Small ribosomal subunit protein uS2</fullName>
    </recommendedName>
    <alternativeName>
        <fullName evidence="2">30S ribosomal protein S2</fullName>
    </alternativeName>
</protein>
<reference key="1">
    <citation type="journal article" date="2008" name="BMC Genomics">
        <title>Genomics of an extreme psychrophile, Psychromonas ingrahamii.</title>
        <authorList>
            <person name="Riley M."/>
            <person name="Staley J.T."/>
            <person name="Danchin A."/>
            <person name="Wang T.Z."/>
            <person name="Brettin T.S."/>
            <person name="Hauser L.J."/>
            <person name="Land M.L."/>
            <person name="Thompson L.S."/>
        </authorList>
    </citation>
    <scope>NUCLEOTIDE SEQUENCE [LARGE SCALE GENOMIC DNA]</scope>
    <source>
        <strain>DSM 17664 / CCUG 51855 / 37</strain>
    </source>
</reference>
<name>RS2_PSYIN</name>
<evidence type="ECO:0000255" key="1">
    <source>
        <dbReference type="HAMAP-Rule" id="MF_00291"/>
    </source>
</evidence>
<evidence type="ECO:0000305" key="2"/>
<proteinExistence type="inferred from homology"/>